<sequence>MSPTKTQNSAEENIRAELGLSAEVVTIRRNAPAALLYEDALKERDTAISNAGALIAYSGDKTGRSPRDKRIVEEETSKDNVWWGPVNKPCSERTWEINRERAADYLRTRDHIYIVDAYAGWDPRYRIKVRVVCARAYHALFMTNMLIRPSKEELENFGEPDFTVWNAGQFPANTHTSGMTSKTTVEINFKQMEMVILGTEYAGEMKKGIFTVMFYLMPVNHNVLTLHSSANQGIQDNDVTLFFGLSGTGKTTLSADPHRLLIGDDEHCWSDHGVFNIEGGCYAKCLGLSAEKEPEIFNAIKFGSVLENIIYDPNTREVDYEDSTITENTRCAYPIEYIPSAKIPCLADHHPKNIVLLTCDASGVLPPVSKLTPDQVMYHFISGYTSKMAGTEQGVTEPEATFSSCFGQPFLSLHPMKYATMLAEKMAEHNANAWLINTGWTGSSYVAGGKRCPLKYTRAILDAIHDGSLAKEEYEVLPIFNLQIPKAVGDKVPASLLNPSKNWAEGEAKYTSNVKSLANLFVENFKTYQDKATEQVLAAGPQL</sequence>
<protein>
    <recommendedName>
        <fullName>Phosphoenolpyruvate carboxykinase (ATP)</fullName>
        <ecNumber>4.1.1.49</ecNumber>
    </recommendedName>
</protein>
<feature type="chain" id="PRO_0000203873" description="Phosphoenolpyruvate carboxykinase (ATP)">
    <location>
        <begin position="1"/>
        <end position="543"/>
    </location>
</feature>
<feature type="binding site" evidence="1">
    <location>
        <begin position="244"/>
        <end position="251"/>
    </location>
    <ligand>
        <name>ATP</name>
        <dbReference type="ChEBI" id="CHEBI:30616"/>
    </ligand>
</feature>
<feature type="sequence conflict" description="In Ref. 1; AAC27661." evidence="2" ref="1">
    <original>D</original>
    <variation>G</variation>
    <location>
        <position position="236"/>
    </location>
</feature>
<feature type="sequence conflict" description="In Ref. 1; AAC27661." evidence="2" ref="1">
    <original>A</original>
    <variation>G</variation>
    <location>
        <position position="255"/>
    </location>
</feature>
<feature type="sequence conflict" description="In Ref. 1; AAC27661." evidence="2" ref="1">
    <original>S</original>
    <variation>I</variation>
    <location>
        <position position="500"/>
    </location>
</feature>
<feature type="sequence conflict" description="In Ref. 1; AAC27661." evidence="2" ref="1">
    <original>K</original>
    <variation>N</variation>
    <location>
        <position position="509"/>
    </location>
</feature>
<feature type="sequence conflict" description="In Ref. 1; AAC27661." evidence="2" ref="1">
    <original>L</original>
    <variation>W</variation>
    <location>
        <position position="520"/>
    </location>
</feature>
<feature type="sequence conflict" description="In Ref. 1; AAC27661." evidence="2" ref="1">
    <original>E</original>
    <variation>K</variation>
    <location>
        <position position="523"/>
    </location>
</feature>
<comment type="catalytic activity">
    <reaction>
        <text>oxaloacetate + ATP = phosphoenolpyruvate + ADP + CO2</text>
        <dbReference type="Rhea" id="RHEA:18617"/>
        <dbReference type="ChEBI" id="CHEBI:16452"/>
        <dbReference type="ChEBI" id="CHEBI:16526"/>
        <dbReference type="ChEBI" id="CHEBI:30616"/>
        <dbReference type="ChEBI" id="CHEBI:58702"/>
        <dbReference type="ChEBI" id="CHEBI:456216"/>
        <dbReference type="EC" id="4.1.1.49"/>
    </reaction>
</comment>
<comment type="pathway">
    <text>Carbohydrate biosynthesis; gluconeogenesis.</text>
</comment>
<comment type="similarity">
    <text evidence="2">Belongs to the phosphoenolpyruvate carboxykinase (ATP) family.</text>
</comment>
<name>PCKA_KLULA</name>
<keyword id="KW-0067">ATP-binding</keyword>
<keyword id="KW-0210">Decarboxylase</keyword>
<keyword id="KW-0312">Gluconeogenesis</keyword>
<keyword id="KW-0456">Lyase</keyword>
<keyword id="KW-0547">Nucleotide-binding</keyword>
<keyword id="KW-1185">Reference proteome</keyword>
<organism>
    <name type="scientific">Kluyveromyces lactis (strain ATCC 8585 / CBS 2359 / DSM 70799 / NBRC 1267 / NRRL Y-1140 / WM37)</name>
    <name type="common">Yeast</name>
    <name type="synonym">Candida sphaerica</name>
    <dbReference type="NCBI Taxonomy" id="284590"/>
    <lineage>
        <taxon>Eukaryota</taxon>
        <taxon>Fungi</taxon>
        <taxon>Dikarya</taxon>
        <taxon>Ascomycota</taxon>
        <taxon>Saccharomycotina</taxon>
        <taxon>Saccharomycetes</taxon>
        <taxon>Saccharomycetales</taxon>
        <taxon>Saccharomycetaceae</taxon>
        <taxon>Kluyveromyces</taxon>
    </lineage>
</organism>
<evidence type="ECO:0000255" key="1"/>
<evidence type="ECO:0000305" key="2"/>
<gene>
    <name type="primary">PCK1</name>
    <name type="ordered locus">KLLA0A00484g</name>
</gene>
<proteinExistence type="inferred from homology"/>
<accession>O43112</accession>
<accession>Q6CYH0</accession>
<dbReference type="EC" id="4.1.1.49"/>
<dbReference type="EMBL" id="U88575">
    <property type="protein sequence ID" value="AAC27661.1"/>
    <property type="molecule type" value="Genomic_DNA"/>
</dbReference>
<dbReference type="EMBL" id="CR382121">
    <property type="protein sequence ID" value="CAH02607.1"/>
    <property type="molecule type" value="Genomic_DNA"/>
</dbReference>
<dbReference type="RefSeq" id="XP_451019.1">
    <property type="nucleotide sequence ID" value="XM_451019.1"/>
</dbReference>
<dbReference type="SMR" id="O43112"/>
<dbReference type="FunCoup" id="O43112">
    <property type="interactions" value="304"/>
</dbReference>
<dbReference type="STRING" id="284590.O43112"/>
<dbReference type="PaxDb" id="284590-O43112"/>
<dbReference type="KEGG" id="kla:KLLA0_A00484g"/>
<dbReference type="eggNOG" id="ENOG502QQI5">
    <property type="taxonomic scope" value="Eukaryota"/>
</dbReference>
<dbReference type="HOGENOM" id="CLU_018247_0_1_1"/>
<dbReference type="InParanoid" id="O43112"/>
<dbReference type="OMA" id="MRYAGEM"/>
<dbReference type="UniPathway" id="UPA00138"/>
<dbReference type="Proteomes" id="UP000000598">
    <property type="component" value="Chromosome A"/>
</dbReference>
<dbReference type="GO" id="GO:0005829">
    <property type="term" value="C:cytosol"/>
    <property type="evidence" value="ECO:0007669"/>
    <property type="project" value="TreeGrafter"/>
</dbReference>
<dbReference type="GO" id="GO:0005524">
    <property type="term" value="F:ATP binding"/>
    <property type="evidence" value="ECO:0007669"/>
    <property type="project" value="UniProtKB-KW"/>
</dbReference>
<dbReference type="GO" id="GO:0004612">
    <property type="term" value="F:phosphoenolpyruvate carboxykinase (ATP) activity"/>
    <property type="evidence" value="ECO:0007669"/>
    <property type="project" value="UniProtKB-EC"/>
</dbReference>
<dbReference type="GO" id="GO:0006094">
    <property type="term" value="P:gluconeogenesis"/>
    <property type="evidence" value="ECO:0007669"/>
    <property type="project" value="UniProtKB-UniPathway"/>
</dbReference>
<dbReference type="CDD" id="cd00484">
    <property type="entry name" value="PEPCK_ATP"/>
    <property type="match status" value="1"/>
</dbReference>
<dbReference type="FunFam" id="2.170.8.10:FF:000001">
    <property type="entry name" value="Phosphoenolpyruvate carboxykinase (ATP)"/>
    <property type="match status" value="1"/>
</dbReference>
<dbReference type="FunFam" id="3.40.449.10:FF:000002">
    <property type="entry name" value="Phosphoenolpyruvate carboxykinase [ATP]"/>
    <property type="match status" value="1"/>
</dbReference>
<dbReference type="Gene3D" id="3.90.228.20">
    <property type="match status" value="1"/>
</dbReference>
<dbReference type="Gene3D" id="3.40.449.10">
    <property type="entry name" value="Phosphoenolpyruvate Carboxykinase, domain 1"/>
    <property type="match status" value="1"/>
</dbReference>
<dbReference type="Gene3D" id="2.170.8.10">
    <property type="entry name" value="Phosphoenolpyruvate Carboxykinase, domain 2"/>
    <property type="match status" value="1"/>
</dbReference>
<dbReference type="HAMAP" id="MF_00453">
    <property type="entry name" value="PEPCK_ATP"/>
    <property type="match status" value="1"/>
</dbReference>
<dbReference type="InterPro" id="IPR001272">
    <property type="entry name" value="PEP_carboxykinase_ATP"/>
</dbReference>
<dbReference type="InterPro" id="IPR013035">
    <property type="entry name" value="PEP_carboxykinase_C"/>
</dbReference>
<dbReference type="InterPro" id="IPR008210">
    <property type="entry name" value="PEP_carboxykinase_N"/>
</dbReference>
<dbReference type="InterPro" id="IPR015994">
    <property type="entry name" value="PEPCK_ATP_CS"/>
</dbReference>
<dbReference type="NCBIfam" id="TIGR00224">
    <property type="entry name" value="pckA"/>
    <property type="match status" value="1"/>
</dbReference>
<dbReference type="NCBIfam" id="NF006820">
    <property type="entry name" value="PRK09344.1-2"/>
    <property type="match status" value="1"/>
</dbReference>
<dbReference type="NCBIfam" id="NF006821">
    <property type="entry name" value="PRK09344.1-3"/>
    <property type="match status" value="1"/>
</dbReference>
<dbReference type="PANTHER" id="PTHR30031:SF0">
    <property type="entry name" value="PHOSPHOENOLPYRUVATE CARBOXYKINASE (ATP)"/>
    <property type="match status" value="1"/>
</dbReference>
<dbReference type="PANTHER" id="PTHR30031">
    <property type="entry name" value="PHOSPHOENOLPYRUVATE CARBOXYKINASE ATP"/>
    <property type="match status" value="1"/>
</dbReference>
<dbReference type="Pfam" id="PF01293">
    <property type="entry name" value="PEPCK_ATP"/>
    <property type="match status" value="1"/>
</dbReference>
<dbReference type="PIRSF" id="PIRSF006294">
    <property type="entry name" value="PEP_crbxkin"/>
    <property type="match status" value="1"/>
</dbReference>
<dbReference type="SUPFAM" id="SSF68923">
    <property type="entry name" value="PEP carboxykinase N-terminal domain"/>
    <property type="match status" value="1"/>
</dbReference>
<dbReference type="SUPFAM" id="SSF53795">
    <property type="entry name" value="PEP carboxykinase-like"/>
    <property type="match status" value="1"/>
</dbReference>
<dbReference type="PROSITE" id="PS00532">
    <property type="entry name" value="PEPCK_ATP"/>
    <property type="match status" value="1"/>
</dbReference>
<reference key="1">
    <citation type="journal article" date="1998" name="Yeast">
        <title>Isolation and nucleotide sequence of the gene encoding phosphoenolpyruvate carboxykinase from Kluyveromyces lactis.</title>
        <authorList>
            <person name="Kitamoto H.K."/>
            <person name="Ohmomo S."/>
            <person name="Iimura Y."/>
        </authorList>
    </citation>
    <scope>NUCLEOTIDE SEQUENCE [GENOMIC DNA]</scope>
    <source>
        <strain>ATCC 8585 / CBS 2359 / DSM 70799 / NBRC 1267 / NRRL Y-1140 / WM37</strain>
    </source>
</reference>
<reference key="2">
    <citation type="journal article" date="2004" name="Nature">
        <title>Genome evolution in yeasts.</title>
        <authorList>
            <person name="Dujon B."/>
            <person name="Sherman D."/>
            <person name="Fischer G."/>
            <person name="Durrens P."/>
            <person name="Casaregola S."/>
            <person name="Lafontaine I."/>
            <person name="de Montigny J."/>
            <person name="Marck C."/>
            <person name="Neuveglise C."/>
            <person name="Talla E."/>
            <person name="Goffard N."/>
            <person name="Frangeul L."/>
            <person name="Aigle M."/>
            <person name="Anthouard V."/>
            <person name="Babour A."/>
            <person name="Barbe V."/>
            <person name="Barnay S."/>
            <person name="Blanchin S."/>
            <person name="Beckerich J.-M."/>
            <person name="Beyne E."/>
            <person name="Bleykasten C."/>
            <person name="Boisrame A."/>
            <person name="Boyer J."/>
            <person name="Cattolico L."/>
            <person name="Confanioleri F."/>
            <person name="de Daruvar A."/>
            <person name="Despons L."/>
            <person name="Fabre E."/>
            <person name="Fairhead C."/>
            <person name="Ferry-Dumazet H."/>
            <person name="Groppi A."/>
            <person name="Hantraye F."/>
            <person name="Hennequin C."/>
            <person name="Jauniaux N."/>
            <person name="Joyet P."/>
            <person name="Kachouri R."/>
            <person name="Kerrest A."/>
            <person name="Koszul R."/>
            <person name="Lemaire M."/>
            <person name="Lesur I."/>
            <person name="Ma L."/>
            <person name="Muller H."/>
            <person name="Nicaud J.-M."/>
            <person name="Nikolski M."/>
            <person name="Oztas S."/>
            <person name="Ozier-Kalogeropoulos O."/>
            <person name="Pellenz S."/>
            <person name="Potier S."/>
            <person name="Richard G.-F."/>
            <person name="Straub M.-L."/>
            <person name="Suleau A."/>
            <person name="Swennen D."/>
            <person name="Tekaia F."/>
            <person name="Wesolowski-Louvel M."/>
            <person name="Westhof E."/>
            <person name="Wirth B."/>
            <person name="Zeniou-Meyer M."/>
            <person name="Zivanovic Y."/>
            <person name="Bolotin-Fukuhara M."/>
            <person name="Thierry A."/>
            <person name="Bouchier C."/>
            <person name="Caudron B."/>
            <person name="Scarpelli C."/>
            <person name="Gaillardin C."/>
            <person name="Weissenbach J."/>
            <person name="Wincker P."/>
            <person name="Souciet J.-L."/>
        </authorList>
    </citation>
    <scope>NUCLEOTIDE SEQUENCE [LARGE SCALE GENOMIC DNA]</scope>
    <source>
        <strain>ATCC 8585 / CBS 2359 / DSM 70799 / NBRC 1267 / NRRL Y-1140 / WM37</strain>
    </source>
</reference>